<reference key="1">
    <citation type="journal article" date="2000" name="Nature">
        <title>Sequence and analysis of chromosome 3 of the plant Arabidopsis thaliana.</title>
        <authorList>
            <person name="Salanoubat M."/>
            <person name="Lemcke K."/>
            <person name="Rieger M."/>
            <person name="Ansorge W."/>
            <person name="Unseld M."/>
            <person name="Fartmann B."/>
            <person name="Valle G."/>
            <person name="Bloecker H."/>
            <person name="Perez-Alonso M."/>
            <person name="Obermaier B."/>
            <person name="Delseny M."/>
            <person name="Boutry M."/>
            <person name="Grivell L.A."/>
            <person name="Mache R."/>
            <person name="Puigdomenech P."/>
            <person name="De Simone V."/>
            <person name="Choisne N."/>
            <person name="Artiguenave F."/>
            <person name="Robert C."/>
            <person name="Brottier P."/>
            <person name="Wincker P."/>
            <person name="Cattolico L."/>
            <person name="Weissenbach J."/>
            <person name="Saurin W."/>
            <person name="Quetier F."/>
            <person name="Schaefer M."/>
            <person name="Mueller-Auer S."/>
            <person name="Gabel C."/>
            <person name="Fuchs M."/>
            <person name="Benes V."/>
            <person name="Wurmbach E."/>
            <person name="Drzonek H."/>
            <person name="Erfle H."/>
            <person name="Jordan N."/>
            <person name="Bangert S."/>
            <person name="Wiedelmann R."/>
            <person name="Kranz H."/>
            <person name="Voss H."/>
            <person name="Holland R."/>
            <person name="Brandt P."/>
            <person name="Nyakatura G."/>
            <person name="Vezzi A."/>
            <person name="D'Angelo M."/>
            <person name="Pallavicini A."/>
            <person name="Toppo S."/>
            <person name="Simionati B."/>
            <person name="Conrad A."/>
            <person name="Hornischer K."/>
            <person name="Kauer G."/>
            <person name="Loehnert T.-H."/>
            <person name="Nordsiek G."/>
            <person name="Reichelt J."/>
            <person name="Scharfe M."/>
            <person name="Schoen O."/>
            <person name="Bargues M."/>
            <person name="Terol J."/>
            <person name="Climent J."/>
            <person name="Navarro P."/>
            <person name="Collado C."/>
            <person name="Perez-Perez A."/>
            <person name="Ottenwaelder B."/>
            <person name="Duchemin D."/>
            <person name="Cooke R."/>
            <person name="Laudie M."/>
            <person name="Berger-Llauro C."/>
            <person name="Purnelle B."/>
            <person name="Masuy D."/>
            <person name="de Haan M."/>
            <person name="Maarse A.C."/>
            <person name="Alcaraz J.-P."/>
            <person name="Cottet A."/>
            <person name="Casacuberta E."/>
            <person name="Monfort A."/>
            <person name="Argiriou A."/>
            <person name="Flores M."/>
            <person name="Liguori R."/>
            <person name="Vitale D."/>
            <person name="Mannhaupt G."/>
            <person name="Haase D."/>
            <person name="Schoof H."/>
            <person name="Rudd S."/>
            <person name="Zaccaria P."/>
            <person name="Mewes H.-W."/>
            <person name="Mayer K.F.X."/>
            <person name="Kaul S."/>
            <person name="Town C.D."/>
            <person name="Koo H.L."/>
            <person name="Tallon L.J."/>
            <person name="Jenkins J."/>
            <person name="Rooney T."/>
            <person name="Rizzo M."/>
            <person name="Walts A."/>
            <person name="Utterback T."/>
            <person name="Fujii C.Y."/>
            <person name="Shea T.P."/>
            <person name="Creasy T.H."/>
            <person name="Haas B."/>
            <person name="Maiti R."/>
            <person name="Wu D."/>
            <person name="Peterson J."/>
            <person name="Van Aken S."/>
            <person name="Pai G."/>
            <person name="Militscher J."/>
            <person name="Sellers P."/>
            <person name="Gill J.E."/>
            <person name="Feldblyum T.V."/>
            <person name="Preuss D."/>
            <person name="Lin X."/>
            <person name="Nierman W.C."/>
            <person name="Salzberg S.L."/>
            <person name="White O."/>
            <person name="Venter J.C."/>
            <person name="Fraser C.M."/>
            <person name="Kaneko T."/>
            <person name="Nakamura Y."/>
            <person name="Sato S."/>
            <person name="Kato T."/>
            <person name="Asamizu E."/>
            <person name="Sasamoto S."/>
            <person name="Kimura T."/>
            <person name="Idesawa K."/>
            <person name="Kawashima K."/>
            <person name="Kishida Y."/>
            <person name="Kiyokawa C."/>
            <person name="Kohara M."/>
            <person name="Matsumoto M."/>
            <person name="Matsuno A."/>
            <person name="Muraki A."/>
            <person name="Nakayama S."/>
            <person name="Nakazaki N."/>
            <person name="Shinpo S."/>
            <person name="Takeuchi C."/>
            <person name="Wada T."/>
            <person name="Watanabe A."/>
            <person name="Yamada M."/>
            <person name="Yasuda M."/>
            <person name="Tabata S."/>
        </authorList>
    </citation>
    <scope>NUCLEOTIDE SEQUENCE [LARGE SCALE GENOMIC DNA]</scope>
    <source>
        <strain>cv. Columbia</strain>
    </source>
</reference>
<reference key="2">
    <citation type="journal article" date="2017" name="Plant J.">
        <title>Araport11: a complete reannotation of the Arabidopsis thaliana reference genome.</title>
        <authorList>
            <person name="Cheng C.Y."/>
            <person name="Krishnakumar V."/>
            <person name="Chan A.P."/>
            <person name="Thibaud-Nissen F."/>
            <person name="Schobel S."/>
            <person name="Town C.D."/>
        </authorList>
    </citation>
    <scope>GENOME REANNOTATION</scope>
    <source>
        <strain>cv. Columbia</strain>
    </source>
</reference>
<reference key="3">
    <citation type="journal article" date="2004" name="Genome Res.">
        <title>Whole genome sequence comparisons and 'full-length' cDNA sequences: a combined approach to evaluate and improve Arabidopsis genome annotation.</title>
        <authorList>
            <person name="Castelli V."/>
            <person name="Aury J.-M."/>
            <person name="Jaillon O."/>
            <person name="Wincker P."/>
            <person name="Clepet C."/>
            <person name="Menard M."/>
            <person name="Cruaud C."/>
            <person name="Quetier F."/>
            <person name="Scarpelli C."/>
            <person name="Schaechter V."/>
            <person name="Temple G."/>
            <person name="Caboche M."/>
            <person name="Weissenbach J."/>
            <person name="Salanoubat M."/>
        </authorList>
    </citation>
    <scope>NUCLEOTIDE SEQUENCE [LARGE SCALE MRNA]</scope>
    <source>
        <strain>cv. Columbia</strain>
    </source>
</reference>
<reference key="4">
    <citation type="journal article" date="2002" name="J. Biol. Chem.">
        <title>Functional cloning and characterization of a plant efflux carrier for multidrug and heavy metal detoxification.</title>
        <authorList>
            <person name="Li L."/>
            <person name="He Z."/>
            <person name="Pandey G.K."/>
            <person name="Tsuchiya T."/>
            <person name="Luan S."/>
        </authorList>
    </citation>
    <scope>GENE FAMILY</scope>
    <scope>NOMENCLATURE</scope>
</reference>
<reference key="5">
    <citation type="journal article" date="2003" name="Eur. J. Biochem.">
        <title>The multidrug/oligosaccharidyl-lipid/polysaccharide (MOP) exporter superfamily.</title>
        <authorList>
            <person name="Hvorup R.N."/>
            <person name="Winnen B."/>
            <person name="Chang A.B."/>
            <person name="Jiang Y."/>
            <person name="Zhou X.F."/>
            <person name="Saier M.H. Jr."/>
        </authorList>
    </citation>
    <scope>GENE FAMILY</scope>
</reference>
<gene>
    <name evidence="3" type="primary">DTX24</name>
    <name evidence="5" type="ordered locus">At3g03620</name>
    <name evidence="6" type="ORF">T12J13.10</name>
</gene>
<organism>
    <name type="scientific">Arabidopsis thaliana</name>
    <name type="common">Mouse-ear cress</name>
    <dbReference type="NCBI Taxonomy" id="3702"/>
    <lineage>
        <taxon>Eukaryota</taxon>
        <taxon>Viridiplantae</taxon>
        <taxon>Streptophyta</taxon>
        <taxon>Embryophyta</taxon>
        <taxon>Tracheophyta</taxon>
        <taxon>Spermatophyta</taxon>
        <taxon>Magnoliopsida</taxon>
        <taxon>eudicotyledons</taxon>
        <taxon>Gunneridae</taxon>
        <taxon>Pentapetalae</taxon>
        <taxon>rosids</taxon>
        <taxon>malvids</taxon>
        <taxon>Brassicales</taxon>
        <taxon>Brassicaceae</taxon>
        <taxon>Camelineae</taxon>
        <taxon>Arabidopsis</taxon>
    </lineage>
</organism>
<protein>
    <recommendedName>
        <fullName evidence="3">Protein DETOXIFICATION 24</fullName>
        <shortName evidence="3">AtDTX24</shortName>
    </recommendedName>
    <alternativeName>
        <fullName evidence="4">Multidrug and toxic compound extrusion protein 24</fullName>
        <shortName evidence="4">MATE protein 24</shortName>
    </alternativeName>
</protein>
<dbReference type="EMBL" id="AC009327">
    <property type="protein sequence ID" value="AAF03470.1"/>
    <property type="status" value="ALT_SEQ"/>
    <property type="molecule type" value="Genomic_DNA"/>
</dbReference>
<dbReference type="EMBL" id="CP002686">
    <property type="protein sequence ID" value="AEE73963.1"/>
    <property type="molecule type" value="Genomic_DNA"/>
</dbReference>
<dbReference type="EMBL" id="CP002686">
    <property type="protein sequence ID" value="ANM65488.1"/>
    <property type="molecule type" value="Genomic_DNA"/>
</dbReference>
<dbReference type="EMBL" id="BX823254">
    <property type="status" value="NOT_ANNOTATED_CDS"/>
    <property type="molecule type" value="mRNA"/>
</dbReference>
<dbReference type="RefSeq" id="NP_001327451.1">
    <property type="nucleotide sequence ID" value="NM_001337478.1"/>
</dbReference>
<dbReference type="RefSeq" id="NP_187012.2">
    <property type="nucleotide sequence ID" value="NM_111233.4"/>
</dbReference>
<dbReference type="SMR" id="F4J158"/>
<dbReference type="STRING" id="3702.F4J158"/>
<dbReference type="PaxDb" id="3702-AT3G03620.1"/>
<dbReference type="ProteomicsDB" id="221884"/>
<dbReference type="EnsemblPlants" id="AT3G03620.1">
    <property type="protein sequence ID" value="AT3G03620.1"/>
    <property type="gene ID" value="AT3G03620"/>
</dbReference>
<dbReference type="EnsemblPlants" id="AT3G03620.2">
    <property type="protein sequence ID" value="AT3G03620.2"/>
    <property type="gene ID" value="AT3G03620"/>
</dbReference>
<dbReference type="GeneID" id="821204"/>
<dbReference type="Gramene" id="AT3G03620.1">
    <property type="protein sequence ID" value="AT3G03620.1"/>
    <property type="gene ID" value="AT3G03620"/>
</dbReference>
<dbReference type="Gramene" id="AT3G03620.2">
    <property type="protein sequence ID" value="AT3G03620.2"/>
    <property type="gene ID" value="AT3G03620"/>
</dbReference>
<dbReference type="KEGG" id="ath:AT3G03620"/>
<dbReference type="Araport" id="AT3G03620"/>
<dbReference type="TAIR" id="AT3G03620"/>
<dbReference type="eggNOG" id="KOG1347">
    <property type="taxonomic scope" value="Eukaryota"/>
</dbReference>
<dbReference type="HOGENOM" id="CLU_012893_1_4_1"/>
<dbReference type="InParanoid" id="F4J158"/>
<dbReference type="OMA" id="IIYKTDW"/>
<dbReference type="OrthoDB" id="2126698at2759"/>
<dbReference type="PRO" id="PR:F4J158"/>
<dbReference type="Proteomes" id="UP000006548">
    <property type="component" value="Chromosome 3"/>
</dbReference>
<dbReference type="ExpressionAtlas" id="F4J158">
    <property type="expression patterns" value="baseline and differential"/>
</dbReference>
<dbReference type="GO" id="GO:0016020">
    <property type="term" value="C:membrane"/>
    <property type="evidence" value="ECO:0007669"/>
    <property type="project" value="UniProtKB-SubCell"/>
</dbReference>
<dbReference type="GO" id="GO:0015297">
    <property type="term" value="F:antiporter activity"/>
    <property type="evidence" value="ECO:0007669"/>
    <property type="project" value="InterPro"/>
</dbReference>
<dbReference type="GO" id="GO:0042910">
    <property type="term" value="F:xenobiotic transmembrane transporter activity"/>
    <property type="evidence" value="ECO:0007669"/>
    <property type="project" value="InterPro"/>
</dbReference>
<dbReference type="GO" id="GO:1990961">
    <property type="term" value="P:xenobiotic detoxification by transmembrane export across the plasma membrane"/>
    <property type="evidence" value="ECO:0007669"/>
    <property type="project" value="InterPro"/>
</dbReference>
<dbReference type="CDD" id="cd13132">
    <property type="entry name" value="MATE_eukaryotic"/>
    <property type="match status" value="1"/>
</dbReference>
<dbReference type="InterPro" id="IPR045069">
    <property type="entry name" value="MATE_euk"/>
</dbReference>
<dbReference type="InterPro" id="IPR002528">
    <property type="entry name" value="MATE_fam"/>
</dbReference>
<dbReference type="NCBIfam" id="TIGR00797">
    <property type="entry name" value="matE"/>
    <property type="match status" value="1"/>
</dbReference>
<dbReference type="PANTHER" id="PTHR11206">
    <property type="entry name" value="MULTIDRUG RESISTANCE PROTEIN"/>
    <property type="match status" value="1"/>
</dbReference>
<dbReference type="Pfam" id="PF01554">
    <property type="entry name" value="MatE"/>
    <property type="match status" value="2"/>
</dbReference>
<sequence>MSTQEEMEERLLREGSDAEGQSNNRESIYLRTKVWSEVNKMWRIALPSSLFRMTSFGSIIVAQAFIGHSSELGLAAYALLQSTFIRFLYGLMGGMSSATETLCGQAYGAEQYHTMGIYLQRSWIVDMAVTTLFLPFIVLAGPILRLLGQNVEITKTVDEIYPWMIPYVYSLIFTMTIQMYLQAQMRNAIVGVLSTLSLALDLVVTWWCVSVMGMGIGGALLGLNVGSWAMVLAEFVYIFGGWCPFTWTGFSIAAFVDLIPMLKLSISSGFMICLEYWYMSILVLMAGYTKDAKIAISAFSICQYIYTWELNICLGFLGAACVRVANELGKGDAHAVRFSIKVILTISTLMGVIFSALCLAFCGRISYLFSNSDEVSDAVNDLSVILAVSILLNSIQPILSGVAVGAGMQSIVAVVNLASYYAIGIPLGLILTYVFHLGVKGLWSGMLAGIAIQTIILCYIIYKTDWELEVKRTCERMKVWSLKPSNEESNPIIREESRSK</sequence>
<keyword id="KW-0472">Membrane</keyword>
<keyword id="KW-1185">Reference proteome</keyword>
<keyword id="KW-0812">Transmembrane</keyword>
<keyword id="KW-1133">Transmembrane helix</keyword>
<keyword id="KW-0813">Transport</keyword>
<evidence type="ECO:0000255" key="1"/>
<evidence type="ECO:0000256" key="2">
    <source>
        <dbReference type="SAM" id="MobiDB-lite"/>
    </source>
</evidence>
<evidence type="ECO:0000303" key="3">
    <source>
    </source>
</evidence>
<evidence type="ECO:0000305" key="4"/>
<evidence type="ECO:0000312" key="5">
    <source>
        <dbReference type="Araport" id="AT3G03620"/>
    </source>
</evidence>
<evidence type="ECO:0000312" key="6">
    <source>
        <dbReference type="EMBL" id="AAF03470.1"/>
    </source>
</evidence>
<accession>F4J158</accession>
<accession>Q9SS64</accession>
<comment type="subcellular location">
    <subcellularLocation>
        <location evidence="1">Membrane</location>
        <topology evidence="1">Multi-pass membrane protein</topology>
    </subcellularLocation>
</comment>
<comment type="similarity">
    <text evidence="4">Belongs to the multi antimicrobial extrusion (MATE) (TC 2.A.66.1) family.</text>
</comment>
<comment type="sequence caution" evidence="4">
    <conflict type="erroneous gene model prediction">
        <sequence resource="EMBL-CDS" id="AAF03470"/>
    </conflict>
</comment>
<proteinExistence type="evidence at transcript level"/>
<feature type="chain" id="PRO_0000434065" description="Protein DETOXIFICATION 24">
    <location>
        <begin position="1"/>
        <end position="500"/>
    </location>
</feature>
<feature type="transmembrane region" description="Helical" evidence="1">
    <location>
        <begin position="48"/>
        <end position="67"/>
    </location>
</feature>
<feature type="transmembrane region" description="Helical" evidence="1">
    <location>
        <begin position="72"/>
        <end position="92"/>
    </location>
</feature>
<feature type="transmembrane region" description="Helical" evidence="1">
    <location>
        <begin position="124"/>
        <end position="144"/>
    </location>
</feature>
<feature type="transmembrane region" description="Helical" evidence="1">
    <location>
        <begin position="160"/>
        <end position="180"/>
    </location>
</feature>
<feature type="transmembrane region" description="Helical" evidence="1">
    <location>
        <begin position="188"/>
        <end position="208"/>
    </location>
</feature>
<feature type="transmembrane region" description="Helical" evidence="1">
    <location>
        <begin position="225"/>
        <end position="245"/>
    </location>
</feature>
<feature type="transmembrane region" description="Helical" evidence="1">
    <location>
        <begin position="266"/>
        <end position="286"/>
    </location>
</feature>
<feature type="transmembrane region" description="Helical" evidence="1">
    <location>
        <begin position="298"/>
        <end position="318"/>
    </location>
</feature>
<feature type="transmembrane region" description="Helical" evidence="1">
    <location>
        <begin position="342"/>
        <end position="362"/>
    </location>
</feature>
<feature type="transmembrane region" description="Helical" evidence="1">
    <location>
        <begin position="384"/>
        <end position="404"/>
    </location>
</feature>
<feature type="transmembrane region" description="Helical" evidence="1">
    <location>
        <begin position="411"/>
        <end position="431"/>
    </location>
</feature>
<feature type="transmembrane region" description="Helical" evidence="1">
    <location>
        <begin position="441"/>
        <end position="461"/>
    </location>
</feature>
<feature type="region of interest" description="Disordered" evidence="2">
    <location>
        <begin position="1"/>
        <end position="20"/>
    </location>
</feature>
<feature type="sequence conflict" description="In Ref. 3; BX823254." evidence="4" ref="3">
    <original>F</original>
    <variation>L</variation>
    <location>
        <position position="173"/>
    </location>
</feature>
<name>DTX24_ARATH</name>